<protein>
    <recommendedName>
        <fullName>Complement C3</fullName>
    </recommendedName>
    <component>
        <recommendedName>
            <fullName>Complement C3 beta chain</fullName>
        </recommendedName>
    </component>
    <component>
        <recommendedName>
            <fullName>C3-beta-c</fullName>
            <shortName>C3bc</shortName>
        </recommendedName>
    </component>
    <component>
        <recommendedName>
            <fullName>Complement C3 alpha chain</fullName>
        </recommendedName>
    </component>
    <component>
        <recommendedName>
            <fullName>C3a anaphylatoxin</fullName>
        </recommendedName>
    </component>
    <component>
        <recommendedName>
            <fullName>Acylation stimulating protein</fullName>
            <shortName>ASP</shortName>
        </recommendedName>
        <alternativeName>
            <fullName>C3adesArg</fullName>
        </alternativeName>
    </component>
    <component>
        <recommendedName>
            <fullName>Complement C3b</fullName>
        </recommendedName>
        <alternativeName>
            <fullName>Complement C3b-alpha' chain</fullName>
        </alternativeName>
    </component>
    <component>
        <recommendedName>
            <fullName>Complement C3c alpha' chain fragment 1</fullName>
        </recommendedName>
    </component>
    <component>
        <recommendedName>
            <fullName>Complement C3dg fragment</fullName>
        </recommendedName>
    </component>
    <component>
        <recommendedName>
            <fullName>Complement C3g fragment</fullName>
        </recommendedName>
    </component>
    <component>
        <recommendedName>
            <fullName>Complement C3d fragment</fullName>
        </recommendedName>
    </component>
    <component>
        <recommendedName>
            <fullName>Complement C3f fragment</fullName>
        </recommendedName>
    </component>
    <component>
        <recommendedName>
            <fullName>Complement C3c alpha' chain fragment 2</fullName>
        </recommendedName>
    </component>
</protein>
<keyword id="KW-0165">Cleavage on pair of basic residues</keyword>
<keyword id="KW-0179">Complement alternate pathway</keyword>
<keyword id="KW-0180">Complement pathway</keyword>
<keyword id="KW-0903">Direct protein sequencing</keyword>
<keyword id="KW-1015">Disulfide bond</keyword>
<keyword id="KW-0276">Fatty acid metabolism</keyword>
<keyword id="KW-0325">Glycoprotein</keyword>
<keyword id="KW-0391">Immunity</keyword>
<keyword id="KW-0395">Inflammatory response</keyword>
<keyword id="KW-0399">Innate immunity</keyword>
<keyword id="KW-0443">Lipid metabolism</keyword>
<keyword id="KW-0597">Phosphoprotein</keyword>
<keyword id="KW-1185">Reference proteome</keyword>
<keyword id="KW-0964">Secreted</keyword>
<keyword id="KW-0732">Signal</keyword>
<keyword id="KW-0882">Thioester bond</keyword>
<gene>
    <name type="primary">C3</name>
</gene>
<reference key="1">
    <citation type="journal article" date="2001" name="Anim. Genet.">
        <title>Polymorphic sites in exon 15 and 30 of the porcine C3 gene.</title>
        <authorList>
            <person name="Wimmers K."/>
            <person name="Mekchay S."/>
            <person name="Ponsuksili S."/>
            <person name="Hardge T."/>
            <person name="Yerle M."/>
            <person name="Schellander K."/>
        </authorList>
    </citation>
    <scope>NUCLEOTIDE SEQUENCE [MRNA]</scope>
    <source>
        <tissue>Liver</tissue>
    </source>
</reference>
<reference key="2">
    <citation type="journal article" date="2003" name="Genet. Sel. Evol.">
        <title>Association of the porcine C3 gene with haemolytic complement activity in the pig.</title>
        <authorList>
            <person name="Mekchay S."/>
            <person name="Ponsuksili S."/>
            <person name="Schellander K."/>
            <person name="Wimmers K."/>
        </authorList>
    </citation>
    <scope>NUCLEOTIDE SEQUENCE [MRNA]</scope>
    <scope>FUNCTION</scope>
    <source>
        <tissue>Liver</tissue>
    </source>
</reference>
<reference key="3">
    <citation type="journal article" date="2003" name="Immunogenetics">
        <title>Molecular characterization of the pig C3 gene and its association with complement activity.</title>
        <authorList>
            <person name="Wimmers K."/>
            <person name="Mekchay S."/>
            <person name="Schellander K."/>
            <person name="Ponsuksili S."/>
        </authorList>
    </citation>
    <scope>NUCLEOTIDE SEQUENCE [GENOMIC DNA]</scope>
    <scope>FUNCTION</scope>
    <source>
        <tissue>Liver</tissue>
    </source>
</reference>
<reference key="4">
    <citation type="submission" date="1998-12" db="EMBL/GenBank/DDBJ databases">
        <title>Porcine acylation stimulating protein.</title>
        <authorList>
            <person name="Miner J.L."/>
            <person name="Toombs C.F."/>
        </authorList>
    </citation>
    <scope>NUCLEOTIDE SEQUENCE [MRNA] OF 607-799</scope>
    <source>
        <tissue>Adipose tissue</tissue>
    </source>
</reference>
<reference key="5">
    <citation type="journal article" date="1976" name="J. Immunol.">
        <title>The primary structure of porcine C3a anaphylatoxin.</title>
        <authorList>
            <person name="Corbin N.C."/>
            <person name="Hugli T.E."/>
        </authorList>
    </citation>
    <scope>PROTEIN SEQUENCE OF 670-746</scope>
</reference>
<evidence type="ECO:0000250" key="1"/>
<evidence type="ECO:0000250" key="2">
    <source>
        <dbReference type="UniProtKB" id="P01024"/>
    </source>
</evidence>
<evidence type="ECO:0000250" key="3">
    <source>
        <dbReference type="UniProtKB" id="P01026"/>
    </source>
</evidence>
<evidence type="ECO:0000255" key="4"/>
<evidence type="ECO:0000255" key="5">
    <source>
        <dbReference type="PROSITE-ProRule" id="PRU00022"/>
    </source>
</evidence>
<evidence type="ECO:0000255" key="6">
    <source>
        <dbReference type="PROSITE-ProRule" id="PRU00295"/>
    </source>
</evidence>
<evidence type="ECO:0000256" key="7">
    <source>
        <dbReference type="SAM" id="MobiDB-lite"/>
    </source>
</evidence>
<evidence type="ECO:0000269" key="8">
    <source>
    </source>
</evidence>
<evidence type="ECO:0000269" key="9">
    <source>
    </source>
</evidence>
<evidence type="ECO:0000305" key="10"/>
<dbReference type="EMBL" id="AF154933">
    <property type="protein sequence ID" value="AAG40565.1"/>
    <property type="molecule type" value="mRNA"/>
</dbReference>
<dbReference type="EMBL" id="AJ494748">
    <property type="protein sequence ID" value="CAD38823.2"/>
    <property type="molecule type" value="Genomic_DNA"/>
</dbReference>
<dbReference type="EMBL" id="AF110278">
    <property type="protein sequence ID" value="AAC99785.1"/>
    <property type="molecule type" value="mRNA"/>
</dbReference>
<dbReference type="PIR" id="A01259">
    <property type="entry name" value="A01259"/>
</dbReference>
<dbReference type="RefSeq" id="NP_999174.1">
    <property type="nucleotide sequence ID" value="NM_214009.1"/>
</dbReference>
<dbReference type="SMR" id="P01025"/>
<dbReference type="FunCoup" id="P01025">
    <property type="interactions" value="812"/>
</dbReference>
<dbReference type="IntAct" id="P01025">
    <property type="interactions" value="1"/>
</dbReference>
<dbReference type="STRING" id="9823.ENSSSCP00000014399"/>
<dbReference type="MEROPS" id="I39.950"/>
<dbReference type="GlyCosmos" id="P01025">
    <property type="glycosylation" value="2 sites, No reported glycans"/>
</dbReference>
<dbReference type="GlyGen" id="P01025">
    <property type="glycosylation" value="3 sites"/>
</dbReference>
<dbReference type="PaxDb" id="9823-ENSSSCP00000027363"/>
<dbReference type="PeptideAtlas" id="P01025"/>
<dbReference type="GeneID" id="397072"/>
<dbReference type="KEGG" id="ssc:397072"/>
<dbReference type="CTD" id="718"/>
<dbReference type="eggNOG" id="KOG1366">
    <property type="taxonomic scope" value="Eukaryota"/>
</dbReference>
<dbReference type="InParanoid" id="P01025"/>
<dbReference type="OrthoDB" id="6359008at2759"/>
<dbReference type="Proteomes" id="UP000008227">
    <property type="component" value="Unplaced"/>
</dbReference>
<dbReference type="Proteomes" id="UP000314985">
    <property type="component" value="Unplaced"/>
</dbReference>
<dbReference type="Proteomes" id="UP000694570">
    <property type="component" value="Unplaced"/>
</dbReference>
<dbReference type="Proteomes" id="UP000694571">
    <property type="component" value="Unplaced"/>
</dbReference>
<dbReference type="Proteomes" id="UP000694720">
    <property type="component" value="Unplaced"/>
</dbReference>
<dbReference type="Proteomes" id="UP000694722">
    <property type="component" value="Unplaced"/>
</dbReference>
<dbReference type="Proteomes" id="UP000694723">
    <property type="component" value="Unplaced"/>
</dbReference>
<dbReference type="Proteomes" id="UP000694724">
    <property type="component" value="Unplaced"/>
</dbReference>
<dbReference type="Proteomes" id="UP000694725">
    <property type="component" value="Unplaced"/>
</dbReference>
<dbReference type="Proteomes" id="UP000694726">
    <property type="component" value="Unplaced"/>
</dbReference>
<dbReference type="Proteomes" id="UP000694727">
    <property type="component" value="Unplaced"/>
</dbReference>
<dbReference type="Proteomes" id="UP000694728">
    <property type="component" value="Unplaced"/>
</dbReference>
<dbReference type="GO" id="GO:0005615">
    <property type="term" value="C:extracellular space"/>
    <property type="evidence" value="ECO:0000318"/>
    <property type="project" value="GO_Central"/>
</dbReference>
<dbReference type="GO" id="GO:0031715">
    <property type="term" value="F:C5L2 anaphylatoxin chemotactic receptor binding"/>
    <property type="evidence" value="ECO:0000250"/>
    <property type="project" value="UniProtKB"/>
</dbReference>
<dbReference type="GO" id="GO:0004866">
    <property type="term" value="F:endopeptidase inhibitor activity"/>
    <property type="evidence" value="ECO:0007669"/>
    <property type="project" value="InterPro"/>
</dbReference>
<dbReference type="GO" id="GO:0006956">
    <property type="term" value="P:complement activation"/>
    <property type="evidence" value="ECO:0000318"/>
    <property type="project" value="GO_Central"/>
</dbReference>
<dbReference type="GO" id="GO:0006957">
    <property type="term" value="P:complement activation, alternative pathway"/>
    <property type="evidence" value="ECO:0007669"/>
    <property type="project" value="UniProtKB-KW"/>
</dbReference>
<dbReference type="GO" id="GO:0006958">
    <property type="term" value="P:complement activation, classical pathway"/>
    <property type="evidence" value="ECO:0007669"/>
    <property type="project" value="UniProtKB-KW"/>
</dbReference>
<dbReference type="GO" id="GO:0006631">
    <property type="term" value="P:fatty acid metabolic process"/>
    <property type="evidence" value="ECO:0007669"/>
    <property type="project" value="UniProtKB-KW"/>
</dbReference>
<dbReference type="GO" id="GO:0006954">
    <property type="term" value="P:inflammatory response"/>
    <property type="evidence" value="ECO:0007669"/>
    <property type="project" value="UniProtKB-KW"/>
</dbReference>
<dbReference type="GO" id="GO:0045087">
    <property type="term" value="P:innate immune response"/>
    <property type="evidence" value="ECO:0000314"/>
    <property type="project" value="AgBase"/>
</dbReference>
<dbReference type="GO" id="GO:0010828">
    <property type="term" value="P:positive regulation of D-glucose transmembrane transport"/>
    <property type="evidence" value="ECO:0000250"/>
    <property type="project" value="UniProtKB"/>
</dbReference>
<dbReference type="GO" id="GO:0045745">
    <property type="term" value="P:positive regulation of G protein-coupled receptor signaling pathway"/>
    <property type="evidence" value="ECO:0000250"/>
    <property type="project" value="UniProtKB"/>
</dbReference>
<dbReference type="GO" id="GO:0010884">
    <property type="term" value="P:positive regulation of lipid storage"/>
    <property type="evidence" value="ECO:0000250"/>
    <property type="project" value="UniProtKB"/>
</dbReference>
<dbReference type="GO" id="GO:0001934">
    <property type="term" value="P:positive regulation of protein phosphorylation"/>
    <property type="evidence" value="ECO:0000250"/>
    <property type="project" value="UniProtKB"/>
</dbReference>
<dbReference type="GO" id="GO:0010866">
    <property type="term" value="P:regulation of triglyceride biosynthetic process"/>
    <property type="evidence" value="ECO:0000250"/>
    <property type="project" value="UniProtKB"/>
</dbReference>
<dbReference type="CDD" id="cd00017">
    <property type="entry name" value="ANATO"/>
    <property type="match status" value="1"/>
</dbReference>
<dbReference type="CDD" id="cd02896">
    <property type="entry name" value="complement_C3_C4_C5"/>
    <property type="match status" value="1"/>
</dbReference>
<dbReference type="CDD" id="cd03583">
    <property type="entry name" value="NTR_complement_C3"/>
    <property type="match status" value="1"/>
</dbReference>
<dbReference type="FunFam" id="1.20.91.20:FF:000001">
    <property type="entry name" value="Complement C3"/>
    <property type="match status" value="1"/>
</dbReference>
<dbReference type="FunFam" id="1.50.10.20:FF:000008">
    <property type="entry name" value="Complement C3"/>
    <property type="match status" value="1"/>
</dbReference>
<dbReference type="FunFam" id="2.20.130.20:FF:000001">
    <property type="entry name" value="Complement C3"/>
    <property type="match status" value="1"/>
</dbReference>
<dbReference type="FunFam" id="2.40.50.120:FF:000013">
    <property type="entry name" value="Complement C3"/>
    <property type="match status" value="1"/>
</dbReference>
<dbReference type="FunFam" id="2.60.40.10:FF:001013">
    <property type="entry name" value="Complement C3"/>
    <property type="match status" value="1"/>
</dbReference>
<dbReference type="FunFam" id="2.60.40.1930:FF:000006">
    <property type="entry name" value="Complement C3"/>
    <property type="match status" value="1"/>
</dbReference>
<dbReference type="FunFam" id="2.60.40.1930:FF:000008">
    <property type="entry name" value="Complement C3"/>
    <property type="match status" value="1"/>
</dbReference>
<dbReference type="FunFam" id="2.60.40.690:FF:000004">
    <property type="entry name" value="Complement C3"/>
    <property type="match status" value="1"/>
</dbReference>
<dbReference type="FunFam" id="6.20.50.160:FF:000003">
    <property type="entry name" value="Complement C3"/>
    <property type="match status" value="1"/>
</dbReference>
<dbReference type="FunFam" id="2.60.40.10:FF:000155">
    <property type="entry name" value="complement C3 isoform X1"/>
    <property type="match status" value="1"/>
</dbReference>
<dbReference type="FunFam" id="2.60.40.1940:FF:000001">
    <property type="entry name" value="Complement component C3"/>
    <property type="match status" value="1"/>
</dbReference>
<dbReference type="Gene3D" id="1.50.10.20">
    <property type="match status" value="1"/>
</dbReference>
<dbReference type="Gene3D" id="2.20.130.20">
    <property type="match status" value="1"/>
</dbReference>
<dbReference type="Gene3D" id="2.40.50.120">
    <property type="match status" value="1"/>
</dbReference>
<dbReference type="Gene3D" id="2.60.120.1540">
    <property type="match status" value="1"/>
</dbReference>
<dbReference type="Gene3D" id="2.60.40.1930">
    <property type="match status" value="3"/>
</dbReference>
<dbReference type="Gene3D" id="2.60.40.1940">
    <property type="match status" value="1"/>
</dbReference>
<dbReference type="Gene3D" id="6.20.50.160">
    <property type="match status" value="1"/>
</dbReference>
<dbReference type="Gene3D" id="2.60.40.690">
    <property type="entry name" value="Alpha-macroglobulin, receptor-binding domain"/>
    <property type="match status" value="1"/>
</dbReference>
<dbReference type="Gene3D" id="1.20.91.20">
    <property type="entry name" value="Anaphylotoxins (complement system)"/>
    <property type="match status" value="1"/>
</dbReference>
<dbReference type="Gene3D" id="2.60.40.10">
    <property type="entry name" value="Immunoglobulins"/>
    <property type="match status" value="2"/>
</dbReference>
<dbReference type="InterPro" id="IPR009048">
    <property type="entry name" value="A-macroglobulin_rcpt-bd"/>
</dbReference>
<dbReference type="InterPro" id="IPR036595">
    <property type="entry name" value="A-macroglobulin_rcpt-bd_sf"/>
</dbReference>
<dbReference type="InterPro" id="IPR050473">
    <property type="entry name" value="A2M/Complement_sys"/>
</dbReference>
<dbReference type="InterPro" id="IPR011625">
    <property type="entry name" value="A2M_N_BRD"/>
</dbReference>
<dbReference type="InterPro" id="IPR047565">
    <property type="entry name" value="Alpha-macroglob_thiol-ester_cl"/>
</dbReference>
<dbReference type="InterPro" id="IPR011626">
    <property type="entry name" value="Alpha-macroglobulin_TED"/>
</dbReference>
<dbReference type="InterPro" id="IPR000020">
    <property type="entry name" value="Anaphylatoxin/fibulin"/>
</dbReference>
<dbReference type="InterPro" id="IPR018081">
    <property type="entry name" value="Anaphylatoxin_comp_syst"/>
</dbReference>
<dbReference type="InterPro" id="IPR001840">
    <property type="entry name" value="Anaphylatoxn_comp_syst_dom"/>
</dbReference>
<dbReference type="InterPro" id="IPR041425">
    <property type="entry name" value="C3/4/5_MG1"/>
</dbReference>
<dbReference type="InterPro" id="IPR049466">
    <property type="entry name" value="C3_CUB1"/>
</dbReference>
<dbReference type="InterPro" id="IPR048848">
    <property type="entry name" value="C3_CUB2"/>
</dbReference>
<dbReference type="InterPro" id="IPR013783">
    <property type="entry name" value="Ig-like_fold"/>
</dbReference>
<dbReference type="InterPro" id="IPR001599">
    <property type="entry name" value="Macroglobln_a2"/>
</dbReference>
<dbReference type="InterPro" id="IPR019742">
    <property type="entry name" value="MacrogloblnA2_CS"/>
</dbReference>
<dbReference type="InterPro" id="IPR002890">
    <property type="entry name" value="MG2"/>
</dbReference>
<dbReference type="InterPro" id="IPR041555">
    <property type="entry name" value="MG3"/>
</dbReference>
<dbReference type="InterPro" id="IPR040839">
    <property type="entry name" value="MG4"/>
</dbReference>
<dbReference type="InterPro" id="IPR001134">
    <property type="entry name" value="Netrin_domain"/>
</dbReference>
<dbReference type="InterPro" id="IPR018933">
    <property type="entry name" value="Netrin_module_non-TIMP"/>
</dbReference>
<dbReference type="InterPro" id="IPR035815">
    <property type="entry name" value="NTR_complement_C3"/>
</dbReference>
<dbReference type="InterPro" id="IPR008930">
    <property type="entry name" value="Terpenoid_cyclase/PrenylTrfase"/>
</dbReference>
<dbReference type="InterPro" id="IPR008993">
    <property type="entry name" value="TIMP-like_OB-fold"/>
</dbReference>
<dbReference type="PANTHER" id="PTHR11412:SF81">
    <property type="entry name" value="COMPLEMENT C3"/>
    <property type="match status" value="1"/>
</dbReference>
<dbReference type="PANTHER" id="PTHR11412">
    <property type="entry name" value="MACROGLOBULIN / COMPLEMENT"/>
    <property type="match status" value="1"/>
</dbReference>
<dbReference type="Pfam" id="PF00207">
    <property type="entry name" value="A2M"/>
    <property type="match status" value="1"/>
</dbReference>
<dbReference type="Pfam" id="PF07703">
    <property type="entry name" value="A2M_BRD"/>
    <property type="match status" value="1"/>
</dbReference>
<dbReference type="Pfam" id="PF07677">
    <property type="entry name" value="A2M_recep"/>
    <property type="match status" value="1"/>
</dbReference>
<dbReference type="Pfam" id="PF01821">
    <property type="entry name" value="ANATO"/>
    <property type="match status" value="1"/>
</dbReference>
<dbReference type="Pfam" id="PF21406">
    <property type="entry name" value="C3_CUB1"/>
    <property type="match status" value="1"/>
</dbReference>
<dbReference type="Pfam" id="PF21308">
    <property type="entry name" value="C3_CUB2"/>
    <property type="match status" value="1"/>
</dbReference>
<dbReference type="Pfam" id="PF17790">
    <property type="entry name" value="MG1"/>
    <property type="match status" value="1"/>
</dbReference>
<dbReference type="Pfam" id="PF01835">
    <property type="entry name" value="MG2"/>
    <property type="match status" value="1"/>
</dbReference>
<dbReference type="Pfam" id="PF17791">
    <property type="entry name" value="MG3"/>
    <property type="match status" value="1"/>
</dbReference>
<dbReference type="Pfam" id="PF17789">
    <property type="entry name" value="MG4"/>
    <property type="match status" value="1"/>
</dbReference>
<dbReference type="Pfam" id="PF01759">
    <property type="entry name" value="NTR"/>
    <property type="match status" value="1"/>
</dbReference>
<dbReference type="Pfam" id="PF07678">
    <property type="entry name" value="TED_complement"/>
    <property type="match status" value="1"/>
</dbReference>
<dbReference type="PRINTS" id="PR00004">
    <property type="entry name" value="ANAPHYLATOXN"/>
</dbReference>
<dbReference type="SFLD" id="SFLDG01179">
    <property type="entry name" value="Complement_C3/C4_Like"/>
    <property type="match status" value="1"/>
</dbReference>
<dbReference type="SMART" id="SM01360">
    <property type="entry name" value="A2M"/>
    <property type="match status" value="1"/>
</dbReference>
<dbReference type="SMART" id="SM01359">
    <property type="entry name" value="A2M_N_2"/>
    <property type="match status" value="1"/>
</dbReference>
<dbReference type="SMART" id="SM01361">
    <property type="entry name" value="A2M_recep"/>
    <property type="match status" value="1"/>
</dbReference>
<dbReference type="SMART" id="SM00104">
    <property type="entry name" value="ANATO"/>
    <property type="match status" value="1"/>
</dbReference>
<dbReference type="SMART" id="SM00643">
    <property type="entry name" value="C345C"/>
    <property type="match status" value="1"/>
</dbReference>
<dbReference type="SMART" id="SM01419">
    <property type="entry name" value="Thiol-ester_cl"/>
    <property type="match status" value="1"/>
</dbReference>
<dbReference type="SUPFAM" id="SSF49410">
    <property type="entry name" value="Alpha-macroglobulin receptor domain"/>
    <property type="match status" value="1"/>
</dbReference>
<dbReference type="SUPFAM" id="SSF47686">
    <property type="entry name" value="Anaphylotoxins (complement system)"/>
    <property type="match status" value="1"/>
</dbReference>
<dbReference type="SUPFAM" id="SSF48239">
    <property type="entry name" value="Terpenoid cyclases/Protein prenyltransferases"/>
    <property type="match status" value="1"/>
</dbReference>
<dbReference type="SUPFAM" id="SSF50242">
    <property type="entry name" value="TIMP-like"/>
    <property type="match status" value="1"/>
</dbReference>
<dbReference type="PROSITE" id="PS00477">
    <property type="entry name" value="ALPHA_2_MACROGLOBULIN"/>
    <property type="match status" value="1"/>
</dbReference>
<dbReference type="PROSITE" id="PS01177">
    <property type="entry name" value="ANAPHYLATOXIN_1"/>
    <property type="match status" value="1"/>
</dbReference>
<dbReference type="PROSITE" id="PS01178">
    <property type="entry name" value="ANAPHYLATOXIN_2"/>
    <property type="match status" value="1"/>
</dbReference>
<dbReference type="PROSITE" id="PS50189">
    <property type="entry name" value="NTR"/>
    <property type="match status" value="1"/>
</dbReference>
<feature type="signal peptide" evidence="2">
    <location>
        <begin position="1"/>
        <end position="22"/>
    </location>
</feature>
<feature type="chain" id="PRO_0000419922" description="Complement C3">
    <location>
        <begin position="23"/>
        <end position="1661"/>
    </location>
</feature>
<feature type="chain" id="PRO_0000419923" description="Complement C3 beta chain" evidence="2">
    <location>
        <begin position="23"/>
        <end position="665"/>
    </location>
</feature>
<feature type="chain" id="PRO_0000430432" description="C3-beta-c" evidence="3">
    <location>
        <begin position="567"/>
        <end position="665"/>
    </location>
</feature>
<feature type="chain" id="PRO_0000419924" description="Complement C3 alpha chain" evidence="2">
    <location>
        <begin position="670"/>
        <end position="1661"/>
    </location>
</feature>
<feature type="chain" id="PRO_0000419925" description="C3a anaphylatoxin">
    <location>
        <begin position="670"/>
        <end position="746"/>
    </location>
</feature>
<feature type="chain" id="PRO_0000419926" description="Acylation stimulating protein" evidence="2">
    <location>
        <begin position="670"/>
        <end position="745"/>
    </location>
</feature>
<feature type="chain" id="PRO_0000419927" description="Complement C3b" evidence="2">
    <location>
        <begin position="747"/>
        <end position="1661"/>
    </location>
</feature>
<feature type="chain" id="PRO_0000419928" description="Complement C3c alpha' chain fragment 1" evidence="2">
    <location>
        <begin position="747"/>
        <end position="953"/>
    </location>
</feature>
<feature type="chain" id="PRO_0000419929" description="Complement C3dg fragment" evidence="2">
    <location>
        <begin position="954"/>
        <end position="1302"/>
    </location>
</feature>
<feature type="chain" id="PRO_0000419930" description="Complement C3g fragment" evidence="2">
    <location>
        <begin position="954"/>
        <end position="1000"/>
    </location>
</feature>
<feature type="chain" id="PRO_0000419931" description="Complement C3d fragment" evidence="2">
    <location>
        <begin position="1001"/>
        <end position="1302"/>
    </location>
</feature>
<feature type="peptide" id="PRO_0000419932" description="Complement C3f fragment" evidence="2">
    <location>
        <begin position="1303"/>
        <end position="1319"/>
    </location>
</feature>
<feature type="chain" id="PRO_0000419933" description="Complement C3c alpha' chain fragment 2" evidence="1">
    <location>
        <begin position="1320"/>
        <end position="1661"/>
    </location>
</feature>
<feature type="domain" description="Anaphylatoxin-like" evidence="5">
    <location>
        <begin position="691"/>
        <end position="726"/>
    </location>
</feature>
<feature type="domain" description="NTR" evidence="6">
    <location>
        <begin position="1516"/>
        <end position="1659"/>
    </location>
</feature>
<feature type="region of interest" description="Disordered" evidence="7">
    <location>
        <begin position="947"/>
        <end position="969"/>
    </location>
</feature>
<feature type="region of interest" description="Interaction with CFP/properdin" evidence="2">
    <location>
        <begin position="1632"/>
        <end position="1657"/>
    </location>
</feature>
<feature type="compositionally biased region" description="Basic and acidic residues" evidence="7">
    <location>
        <begin position="947"/>
        <end position="960"/>
    </location>
</feature>
<feature type="site" description="Cleavage; by carboxypeptidases" evidence="2">
    <location>
        <begin position="745"/>
        <end position="746"/>
    </location>
</feature>
<feature type="site" description="Cleavage; by C3 convertase" evidence="2">
    <location>
        <begin position="746"/>
        <end position="747"/>
    </location>
</feature>
<feature type="site" description="Cleavage; by factor I" evidence="2">
    <location>
        <begin position="1301"/>
        <end position="1302"/>
    </location>
</feature>
<feature type="site" description="Cleavage; by factor I" evidence="2">
    <location>
        <begin position="1318"/>
        <end position="1319"/>
    </location>
</feature>
<feature type="site" description="Coordinates Mg(2+) for interaction with Complement factor B Bb fragment (CFB)" evidence="2">
    <location>
        <position position="1661"/>
    </location>
</feature>
<feature type="modified residue" description="Phosphoserine" evidence="2">
    <location>
        <position position="38"/>
    </location>
</feature>
<feature type="modified residue" description="Phosphoserine" evidence="2">
    <location>
        <position position="70"/>
    </location>
</feature>
<feature type="modified residue" description="Phosphoserine" evidence="2">
    <location>
        <position position="302"/>
    </location>
</feature>
<feature type="modified residue" description="Phosphoserine" evidence="2">
    <location>
        <position position="670"/>
    </location>
</feature>
<feature type="modified residue" description="Phosphoserine" evidence="2">
    <location>
        <position position="966"/>
    </location>
</feature>
<feature type="modified residue" description="Phosphoserine" evidence="2">
    <location>
        <position position="1319"/>
    </location>
</feature>
<feature type="modified residue" description="Phosphoserine" evidence="2">
    <location>
        <position position="1571"/>
    </location>
</feature>
<feature type="glycosylation site" description="N-linked (GlcNAc...) asparagine" evidence="4">
    <location>
        <position position="937"/>
    </location>
</feature>
<feature type="glycosylation site" description="N-linked (GlcNAc...) asparagine" evidence="4">
    <location>
        <position position="1615"/>
    </location>
</feature>
<feature type="disulfide bond" description="Interchain (between beta and alpha chains)" evidence="5 6">
    <location>
        <begin position="557"/>
        <end position="814"/>
    </location>
</feature>
<feature type="disulfide bond" evidence="2">
    <location>
        <begin position="625"/>
        <end position="660"/>
    </location>
</feature>
<feature type="disulfide bond" evidence="2">
    <location>
        <begin position="691"/>
        <end position="718"/>
    </location>
</feature>
<feature type="disulfide bond" evidence="2">
    <location>
        <begin position="692"/>
        <end position="725"/>
    </location>
</feature>
<feature type="disulfide bond" evidence="2">
    <location>
        <begin position="705"/>
        <end position="726"/>
    </location>
</feature>
<feature type="disulfide bond" evidence="2">
    <location>
        <begin position="871"/>
        <end position="1511"/>
    </location>
</feature>
<feature type="disulfide bond" evidence="2">
    <location>
        <begin position="1099"/>
        <end position="1156"/>
    </location>
</feature>
<feature type="disulfide bond" evidence="2">
    <location>
        <begin position="1356"/>
        <end position="1487"/>
    </location>
</feature>
<feature type="disulfide bond" evidence="2">
    <location>
        <begin position="1387"/>
        <end position="1456"/>
    </location>
</feature>
<feature type="disulfide bond" evidence="2">
    <location>
        <begin position="1504"/>
        <end position="1509"/>
    </location>
</feature>
<feature type="disulfide bond" evidence="2">
    <location>
        <begin position="1516"/>
        <end position="1588"/>
    </location>
</feature>
<feature type="disulfide bond" evidence="2">
    <location>
        <begin position="1535"/>
        <end position="1659"/>
    </location>
</feature>
<feature type="disulfide bond" evidence="2">
    <location>
        <begin position="1635"/>
        <end position="1644"/>
    </location>
</feature>
<feature type="cross-link" description="Isoglutamyl cysteine thioester (Cys-Gln)" evidence="2">
    <location>
        <begin position="1008"/>
        <end position="1011"/>
    </location>
</feature>
<feature type="sequence conflict" description="In Ref. 5; AA sequence." evidence="10" ref="5">
    <original>D</original>
    <variation>N</variation>
    <location>
        <position position="679"/>
    </location>
</feature>
<feature type="sequence conflict" description="In Ref. 5; AA sequence." evidence="10" ref="5">
    <original>DV</original>
    <variation>EL</variation>
    <location>
        <begin position="687"/>
        <end position="688"/>
    </location>
</feature>
<feature type="sequence conflict" description="In Ref. 5; AA sequence." evidence="10" ref="5">
    <original>D</original>
    <variation>N</variation>
    <location>
        <position position="698"/>
    </location>
</feature>
<feature type="sequence conflict" description="In Ref. 5; AA sequence." evidence="10" ref="5">
    <original>QHGD</original>
    <variation>HQGN</variation>
    <location>
        <begin position="713"/>
        <end position="716"/>
    </location>
</feature>
<feature type="sequence conflict" description="In Ref. 5; AA sequence." evidence="10" ref="5">
    <original>D</original>
    <variation>N</variation>
    <location>
        <position position="724"/>
    </location>
</feature>
<name>CO3_PIG</name>
<proteinExistence type="evidence at protein level"/>
<organism>
    <name type="scientific">Sus scrofa</name>
    <name type="common">Pig</name>
    <dbReference type="NCBI Taxonomy" id="9823"/>
    <lineage>
        <taxon>Eukaryota</taxon>
        <taxon>Metazoa</taxon>
        <taxon>Chordata</taxon>
        <taxon>Craniata</taxon>
        <taxon>Vertebrata</taxon>
        <taxon>Euteleostomi</taxon>
        <taxon>Mammalia</taxon>
        <taxon>Eutheria</taxon>
        <taxon>Laurasiatheria</taxon>
        <taxon>Artiodactyla</taxon>
        <taxon>Suina</taxon>
        <taxon>Suidae</taxon>
        <taxon>Sus</taxon>
    </lineage>
</organism>
<accession>P01025</accession>
<accession>O97940</accession>
<accession>Q9GKP1</accession>
<sequence length="1661" mass="186807">MGSTSGPRLLLLLLTSLPLALGDPIYTIITPNVLRLESEEMVVLEAHEGQGDIRVSVTVHDFPAKRQVLSSETTTLNNANNYLSTVNIKIPASKEFKSEKGHKFVTVQALFGNVQVEKVVLVSLQSGYLFIQTDKTIYTPGSTVLYRIFTVDHKLLPVGQTIVVTIETPEGIDIKRDSLSSHNQFGILALSWNIPELVNMGQWKIRAHYEDAPQQVFSAEFEVKEYVLPSFEVQVEPSEKFYYIDDPNGLTVNIIARFLYGESVDGTAFVIFGVQDGDQRISLSQSLTRVPIIDGTGEATLSQGVLLNGVHYSSVNDLVGKSIYVSVTVILNSGSDMVEAERTGIPIVTSPYQIHFTKTPKFFKPAMPFDLMVYVTNPDGSPARHIPVVTEDFKVRSLTQEDGVAKLSINTPDNRNSLPITVRTEKDGIPAARQASKTMHVLPYNTQGNSKNYLHLSLPRVELKPGENLNVNFHLRTDPGYQDKIRYFTYLIMNKGKLLKVGRQPRESGQVVVVLPLTITTDFIPSFRLVAYYTLIAANGQREVVADSVWVDVKDSCVGTLVVKGGGKQDKQHRPGQQMTLEIQGERGARVGLVAVDKGVFVLNKKNKLTQRRIWDVVEKADIGCTPGSGKDFAGVFTDAGLAFKSSKGLQTPQRADLECPKPAARKRRSVQLMEKRMDKLGQYSKDVRRCCEHGMRDNPMKFSCQRRAQFIQHGDACVKAFLDCCEYIAKLRQQHSRNKPLGLARSDLDEEIIPEEDIISRSQFPESWLWTIEEFKEPDKNGISTKTMNVFLKDSITTWEILAVSLSDKKGICVADPYEVVVKQDFFIDLRLPYSVVRNEQVEIRAILYNYREAEDLKVRVELLYNPAFCSLATAKKRHQQTLTVPAKSSVPVPYIIVPLKTGLQEVEVKAAVYNHFISDGVKKTLKVVPEGMRVNKTVVTRTLDPEHKGQQGVQREEIPPADLSDQVPDTESETKILLQGTPVAQMVEDAIDGDRLKHLIQTPSGCGEQNMIGMTPTVIAVHYLDSTEQWEKFGLEKRQEALELIKKGYTQQLAFRQKNSAFAAFQDRLSSTLLTAYVVKVFAMAANLIAIDSQVLCGAVKWLILEKQKPDGVFEENGPVIHQEMIGGFKNTEEKDVSLTAFVLIALQEAKDICEPQVNSLLRSINKARDFLADYYLELKRPYTVAIAGYALALSDKLDEPFLNKLLSTAKERNRWEEPGQKLHNVEATSYALLALLVVKDFDSVPPIVRWLNEQRYYGGGYGSTQATFMVFQALAQYQKDVPDHKDLNLDVSIHLPSRSAPVRHRILWESASLLRSEETKENEGFTLIAEGKGQGTLSVVTMYHGKAKGKTTCKKFDLKVSIHPAPEPVKKPQEAKSSMVLDICTRYLGNQDATMSILDISMMTGFSPDTEDLKLLSTGVDRYISKYELNKALSNKNTLIIYLDKISHTLEDCISFKVHQYFNVGLIQPGSVKVYSYYNLDESCTRFYHPEKEDGMLNKLCHKEMCRCAEENCFMHHDEEEVTLDDRLERACEPGVDYVYKTRLLKKELSDDFDDYIMVIEQIIKSGSDEVQVGQERRFISHIKCREALKLKEGGHYLVWGVSSDLWGEKPNISYIIGKDTWVELWPDGDVCQDEENQKQCQDLANFSENMVVFGCPN</sequence>
<comment type="function">
    <text evidence="8 9">Precursor of non-enzymatic components of the classical, alternative, lectin and GZMK complement pathways, which consist in a cascade of proteins that leads to phagocytosis and breakdown of pathogens and signaling that strengthens the adaptive immune system.</text>
</comment>
<comment type="function">
    <molecule>Complement C3b</molecule>
    <text evidence="2">Non-enzymatic component of C5 convertase. Generated following cleavage by C3 convertase, it covalently attaches to the surface of pathogens, where it acts as an opsonin that marks the surface of antigens for removal. Complement C3b binds covalently via its reactive thioester, to cell surface carbohydrates or immune aggregates. Together with complement C4b, it then recruits the serine protease complement C2b to form the C5 convertase, which cleaves and activate C5, the next component of the complement pathways. In the alternative complement pathway, recruits the serine protease CFB to form the C5 convertase that cleaves and activates C5.</text>
</comment>
<comment type="function">
    <molecule>C3a anaphylatoxin</molecule>
    <text evidence="2">Mediator of local inflammatory process released following cleavage by C3 convertase. Acts by binding to its receptor, C3AR1, activating G protein-coupled receptor signaling, promoting the phosphorylation, ARRB2-mediated internalization and endocytosis of C3AR1. C3a anaphylatoxin stimulates the activation of immune cells such as mast cells and basophilic leukocytes to release inflammation agents, such as cytokines, chemokines and histamine, which promote inflammation development. Also acts as potent chemoattractant for the migration of macrophages and neutrophils to the inflamed tissues, resulting in neutralization of the inflammatory triggers by multiple ways, such as phagocytosis and generation of reactive oxidants.</text>
</comment>
<comment type="function">
    <molecule>Acylation stimulating protein</molecule>
    <text evidence="2">Adipogenic hormone that stimulates triglyceride synthesis and glucose transport in adipocytes, regulating fat storage and playing a role in postprandial triglyceride clearance. Appears to stimulate triglyceride synthesis via activation of the PLC, MAPK and AKT signaling pathways. Acts by binding to its receptor, C5AR2, activating G protein-coupled receptor signaling, promoting the phosphorylation, ARRB2-mediated internalization and endocytosis of C5AR2.</text>
</comment>
<comment type="function">
    <molecule>C3-beta-c</molecule>
    <text evidence="3">Acts as a chemoattractant for neutrophils in chronic inflammation.</text>
</comment>
<comment type="activity regulation">
    <text evidence="2">Complement activation is inhibited by VSIG4.</text>
</comment>
<comment type="subunit">
    <text evidence="2">In absence of complement activation, the C3 precursor is first processed by the removal of 4 Arg residues, forming two chains, beta and alpha, linked by a disulfide bond.</text>
</comment>
<comment type="subunit">
    <molecule>Complement C3b</molecule>
    <text evidence="2">Complement C3b is composed of complement C3b and complement C3 beta chains that are associated via disulfide bonds. Non-enzymatic component of the C5 convertase, also named C4bC2bC3b, composed of the serine protease complement C2b (C2), complement C3b, as well as complement C4b (C4). Non-enzymatic component of the C5 convertase of the alternative complement pathways composed of the serine protease complement CFB and complement C3b. Interacts with CFP; interaction takes place together with CFB in the alternative complement system and allows the complex to become active. Interacts with CR1 (via Sushi 8 and Sushi 9 domains). Interacts with CFH.</text>
</comment>
<comment type="subunit">
    <molecule>Complement C3d fragment</molecule>
    <text evidence="2">Interacts with CFH. Interacts with CR2.</text>
</comment>
<comment type="subunit">
    <molecule>Complement C3dg fragment</molecule>
    <text evidence="2">During pregnancy, C3dg exists as a complex (probably a 2:2:2 heterohexamer) with AGT and the proform of PRG2. Interacts with CR2 (via the N-terminal Sushi domains 1 and 2).</text>
</comment>
<comment type="interaction">
    <interactant intactId="EBI-11688674">
        <id>P01025</id>
    </interactant>
    <interactant intactId="EBI-11688666">
        <id>C7EYC8</id>
        <label>gC</label>
    </interactant>
    <organismsDiffer>true</organismsDiffer>
    <experiments>2</experiments>
</comment>
<comment type="subcellular location">
    <subcellularLocation>
        <location evidence="2">Secreted</location>
    </subcellularLocation>
</comment>
<comment type="subcellular location">
    <molecule>Complement C3b</molecule>
    <subcellularLocation>
        <location evidence="2">Secreted</location>
    </subcellularLocation>
    <subcellularLocation>
        <location evidence="2">Cell surface</location>
    </subcellularLocation>
    <text evidence="2">Covalently associated with the surface of pathogens: the internal thioester bond reacts with carbohydrate antigens on the target surface to form amide or ester bonds.</text>
</comment>
<comment type="subcellular location">
    <molecule>C3a anaphylatoxin</molecule>
    <subcellularLocation>
        <location evidence="2">Secreted</location>
    </subcellularLocation>
</comment>
<comment type="PTM">
    <text evidence="2">C3 precursor is first processed by the removal of 4 Arg residues, forming two chains, beta and alpha, linked by a disulfide bond. During activation of the complement systems, the alpha chain is cleaved into C3a and C3b by the C3 convertase: C3b stays linked to the beta chain, while C3a is released in the plasma. The alpha chain is cleaved by the serine protease complement C2b component of the C3 convertase to generate C3a and C3b following activation by the classical, lectin and GZMK complement systems. The alpha chain is cleaved by CFB component of the C3 convertase to generate C3a and C3b following activation by the alternative complement system.</text>
</comment>
<comment type="PTM">
    <molecule>C3a anaphylatoxin</molecule>
    <text evidence="2">C3a is further processed by carboxypeptidases to release the C-terminal arginine residue generating the acylation stimulating protein (ASP). Levels of ASP are increased in adipocytes in the postprandial period and by insulin and dietary chylomicrons.</text>
</comment>
<comment type="PTM">
    <molecule>Complement C3b</molecule>
    <text evidence="2">Complement C3b is rapidly split in two positions by factor I (CFI) and a cofactor (CFH) to form iC3b (inactivated C3b) and C3f which is released. CFI and CFH catalyze proteolytic degradation of already-deposited complement C3b. Then iC3b is slowly cleaved (possibly by CFI) to form C3c (beta chain + alpha' chain fragment 1 + alpha' chain fragment 2), C3dg and C3f. Other proteases produce other fragments such as C3d or C3g.</text>
</comment>
<comment type="PTM">
    <molecule>Complement C3b</molecule>
    <text evidence="2">Upon activation, the internal thioester bond reacts with carbohydrate antigens on the target surface to form amide or ester bonds, leading to covalent association with the surface of pathogens.</text>
</comment>
<comment type="PTM">
    <molecule>Complement C3b</molecule>
    <text evidence="2">Complement C3b interacts with complement C4b via a thioester linkage.</text>
</comment>
<comment type="PTM">
    <text evidence="2">Phosphorylated by FAM20C in the extracellular medium.</text>
</comment>